<sequence length="267" mass="27679">MFPQDTLTIGGKVFTSRLMLGTGKFTDFHVMRDALEASGTQIVTVAIRRVELKAPGHVGLLDALDLSRYQLLPNTAGCRTAEEAVRVARLARAATGVNWVKLEVIPDPRWLLPDPIGTLKAAEILVGEGFTVLPYVQPDAVLARALERVGCATVMPLASPIGSGRGLRTGELLRTVLDGAGVPIVVDAGLGVPSDAAQALEAGADAVLVNTAVAEARDPVGMAQAFALGVQAGRAAFLAGRMAERTHASPSSPAAGVPCLPDPEVPV</sequence>
<accession>Q1IX18</accession>
<reference key="1">
    <citation type="submission" date="2006-04" db="EMBL/GenBank/DDBJ databases">
        <title>Complete sequence of chromosome of Deinococcus geothermalis DSM 11300.</title>
        <authorList>
            <person name="Copeland A."/>
            <person name="Lucas S."/>
            <person name="Lapidus A."/>
            <person name="Barry K."/>
            <person name="Detter J.C."/>
            <person name="Glavina del Rio T."/>
            <person name="Hammon N."/>
            <person name="Israni S."/>
            <person name="Dalin E."/>
            <person name="Tice H."/>
            <person name="Pitluck S."/>
            <person name="Brettin T."/>
            <person name="Bruce D."/>
            <person name="Han C."/>
            <person name="Tapia R."/>
            <person name="Saunders E."/>
            <person name="Gilna P."/>
            <person name="Schmutz J."/>
            <person name="Larimer F."/>
            <person name="Land M."/>
            <person name="Hauser L."/>
            <person name="Kyrpides N."/>
            <person name="Kim E."/>
            <person name="Daly M.J."/>
            <person name="Fredrickson J.K."/>
            <person name="Makarova K.S."/>
            <person name="Gaidamakova E.K."/>
            <person name="Zhai M."/>
            <person name="Richardson P."/>
        </authorList>
    </citation>
    <scope>NUCLEOTIDE SEQUENCE [LARGE SCALE GENOMIC DNA]</scope>
    <source>
        <strain>DSM 11300 / CIP 105573 / AG-3a</strain>
    </source>
</reference>
<protein>
    <recommendedName>
        <fullName evidence="1">Thiazole synthase</fullName>
        <ecNumber evidence="1">2.8.1.10</ecNumber>
    </recommendedName>
</protein>
<comment type="function">
    <text evidence="1">Catalyzes the rearrangement of 1-deoxy-D-xylulose 5-phosphate (DXP) to produce the thiazole phosphate moiety of thiamine. Sulfur is provided by the thiocarboxylate moiety of the carrier protein ThiS. In vitro, sulfur can be provided by H(2)S.</text>
</comment>
<comment type="catalytic activity">
    <reaction evidence="1">
        <text>[ThiS sulfur-carrier protein]-C-terminal-Gly-aminoethanethioate + 2-iminoacetate + 1-deoxy-D-xylulose 5-phosphate = [ThiS sulfur-carrier protein]-C-terminal Gly-Gly + 2-[(2R,5Z)-2-carboxy-4-methylthiazol-5(2H)-ylidene]ethyl phosphate + 2 H2O + H(+)</text>
        <dbReference type="Rhea" id="RHEA:26297"/>
        <dbReference type="Rhea" id="RHEA-COMP:12909"/>
        <dbReference type="Rhea" id="RHEA-COMP:19908"/>
        <dbReference type="ChEBI" id="CHEBI:15377"/>
        <dbReference type="ChEBI" id="CHEBI:15378"/>
        <dbReference type="ChEBI" id="CHEBI:57792"/>
        <dbReference type="ChEBI" id="CHEBI:62899"/>
        <dbReference type="ChEBI" id="CHEBI:77846"/>
        <dbReference type="ChEBI" id="CHEBI:90778"/>
        <dbReference type="ChEBI" id="CHEBI:232372"/>
        <dbReference type="EC" id="2.8.1.10"/>
    </reaction>
</comment>
<comment type="pathway">
    <text evidence="1">Cofactor biosynthesis; thiamine diphosphate biosynthesis.</text>
</comment>
<comment type="subunit">
    <text evidence="1">Homotetramer. Forms heterodimers with either ThiH or ThiS.</text>
</comment>
<comment type="subcellular location">
    <subcellularLocation>
        <location evidence="1">Cytoplasm</location>
    </subcellularLocation>
</comment>
<comment type="similarity">
    <text evidence="1">Belongs to the ThiG family.</text>
</comment>
<feature type="chain" id="PRO_1000026005" description="Thiazole synthase">
    <location>
        <begin position="1"/>
        <end position="267"/>
    </location>
</feature>
<feature type="region of interest" description="Disordered" evidence="2">
    <location>
        <begin position="247"/>
        <end position="267"/>
    </location>
</feature>
<feature type="active site" description="Schiff-base intermediate with DXP" evidence="1">
    <location>
        <position position="101"/>
    </location>
</feature>
<feature type="binding site" evidence="1">
    <location>
        <position position="162"/>
    </location>
    <ligand>
        <name>1-deoxy-D-xylulose 5-phosphate</name>
        <dbReference type="ChEBI" id="CHEBI:57792"/>
    </ligand>
</feature>
<feature type="binding site" evidence="1">
    <location>
        <begin position="188"/>
        <end position="189"/>
    </location>
    <ligand>
        <name>1-deoxy-D-xylulose 5-phosphate</name>
        <dbReference type="ChEBI" id="CHEBI:57792"/>
    </ligand>
</feature>
<feature type="binding site" evidence="1">
    <location>
        <begin position="210"/>
        <end position="211"/>
    </location>
    <ligand>
        <name>1-deoxy-D-xylulose 5-phosphate</name>
        <dbReference type="ChEBI" id="CHEBI:57792"/>
    </ligand>
</feature>
<evidence type="ECO:0000255" key="1">
    <source>
        <dbReference type="HAMAP-Rule" id="MF_00443"/>
    </source>
</evidence>
<evidence type="ECO:0000256" key="2">
    <source>
        <dbReference type="SAM" id="MobiDB-lite"/>
    </source>
</evidence>
<organism>
    <name type="scientific">Deinococcus geothermalis (strain DSM 11300 / CIP 105573 / AG-3a)</name>
    <dbReference type="NCBI Taxonomy" id="319795"/>
    <lineage>
        <taxon>Bacteria</taxon>
        <taxon>Thermotogati</taxon>
        <taxon>Deinococcota</taxon>
        <taxon>Deinococci</taxon>
        <taxon>Deinococcales</taxon>
        <taxon>Deinococcaceae</taxon>
        <taxon>Deinococcus</taxon>
    </lineage>
</organism>
<name>THIG_DEIGD</name>
<proteinExistence type="inferred from homology"/>
<dbReference type="EC" id="2.8.1.10" evidence="1"/>
<dbReference type="EMBL" id="CP000359">
    <property type="protein sequence ID" value="ABF46216.1"/>
    <property type="molecule type" value="Genomic_DNA"/>
</dbReference>
<dbReference type="RefSeq" id="WP_011531043.1">
    <property type="nucleotide sequence ID" value="NC_008025.1"/>
</dbReference>
<dbReference type="SMR" id="Q1IX18"/>
<dbReference type="STRING" id="319795.Dgeo_1921"/>
<dbReference type="KEGG" id="dge:Dgeo_1921"/>
<dbReference type="eggNOG" id="COG2022">
    <property type="taxonomic scope" value="Bacteria"/>
</dbReference>
<dbReference type="HOGENOM" id="CLU_062233_1_0_0"/>
<dbReference type="UniPathway" id="UPA00060"/>
<dbReference type="Proteomes" id="UP000002431">
    <property type="component" value="Chromosome"/>
</dbReference>
<dbReference type="GO" id="GO:0005737">
    <property type="term" value="C:cytoplasm"/>
    <property type="evidence" value="ECO:0007669"/>
    <property type="project" value="UniProtKB-SubCell"/>
</dbReference>
<dbReference type="GO" id="GO:1990107">
    <property type="term" value="F:thiazole synthase activity"/>
    <property type="evidence" value="ECO:0007669"/>
    <property type="project" value="UniProtKB-EC"/>
</dbReference>
<dbReference type="GO" id="GO:0009229">
    <property type="term" value="P:thiamine diphosphate biosynthetic process"/>
    <property type="evidence" value="ECO:0007669"/>
    <property type="project" value="UniProtKB-UniRule"/>
</dbReference>
<dbReference type="CDD" id="cd04728">
    <property type="entry name" value="ThiG"/>
    <property type="match status" value="1"/>
</dbReference>
<dbReference type="Gene3D" id="3.20.20.70">
    <property type="entry name" value="Aldolase class I"/>
    <property type="match status" value="1"/>
</dbReference>
<dbReference type="HAMAP" id="MF_00443">
    <property type="entry name" value="ThiG"/>
    <property type="match status" value="1"/>
</dbReference>
<dbReference type="InterPro" id="IPR013785">
    <property type="entry name" value="Aldolase_TIM"/>
</dbReference>
<dbReference type="InterPro" id="IPR033983">
    <property type="entry name" value="Thiazole_synthase_ThiG"/>
</dbReference>
<dbReference type="InterPro" id="IPR008867">
    <property type="entry name" value="ThiG"/>
</dbReference>
<dbReference type="PANTHER" id="PTHR34266">
    <property type="entry name" value="THIAZOLE SYNTHASE"/>
    <property type="match status" value="1"/>
</dbReference>
<dbReference type="PANTHER" id="PTHR34266:SF2">
    <property type="entry name" value="THIAZOLE SYNTHASE"/>
    <property type="match status" value="1"/>
</dbReference>
<dbReference type="Pfam" id="PF05690">
    <property type="entry name" value="ThiG"/>
    <property type="match status" value="1"/>
</dbReference>
<dbReference type="SUPFAM" id="SSF110399">
    <property type="entry name" value="ThiG-like"/>
    <property type="match status" value="1"/>
</dbReference>
<keyword id="KW-0963">Cytoplasm</keyword>
<keyword id="KW-0704">Schiff base</keyword>
<keyword id="KW-0784">Thiamine biosynthesis</keyword>
<keyword id="KW-0808">Transferase</keyword>
<gene>
    <name evidence="1" type="primary">thiG</name>
    <name type="ordered locus">Dgeo_1921</name>
</gene>